<accession>A0A023GPJ0</accession>
<comment type="function">
    <text evidence="1 2">Immunity protein component of a toxin-immunity protein module, which functions as a cellular contact-dependent growth inhibition (CDI) system. CDI modules allow bacteria to communicate with and inhibit the growth of closely related neighboring bacteria in a contact-dependent fashion. Protects cells against the 16S rRNase activity of CdiA-CT, its cognate toxin protein, but not against the toxic effects of a similar rRNase, non-cognate CdiA-CT from E.chrysanthemi strain EC16.</text>
</comment>
<comment type="subunit">
    <text evidence="1">Interacts with cognate toxin fragment CdiA-CT.</text>
</comment>
<comment type="induction">
    <text evidence="1">Not expressed under laboratory conditions.</text>
</comment>
<reference key="1">
    <citation type="journal article" date="2010" name="J. Bacteriol.">
        <title>Complete genome sequence of Enterobacter cloacae subsp. cloacae type strain ATCC 13047.</title>
        <authorList>
            <person name="Ren Y."/>
            <person name="Ren Y."/>
            <person name="Zhou Z."/>
            <person name="Guo X."/>
            <person name="Li Y."/>
            <person name="Feng L."/>
            <person name="Wang L."/>
        </authorList>
    </citation>
    <scope>NUCLEOTIDE SEQUENCE [LARGE SCALE GENOMIC DNA]</scope>
    <source>
        <strain>ATCC 13047 / DSM 30054 / NBRC 13535 / NCTC 10005 / WDCM 00083 / NCDC 279-56</strain>
    </source>
</reference>
<reference key="2">
    <citation type="journal article" date="2014" name="Mol. Microbiol.">
        <title>The F pilus mediates a novel pathway of CDI toxin import.</title>
        <authorList>
            <person name="Beck C.M."/>
            <person name="Diner E.J."/>
            <person name="Kim J.J."/>
            <person name="Low D.A."/>
            <person name="Hayes C.S."/>
        </authorList>
    </citation>
    <scope>FUNCTION</scope>
    <source>
        <strain>ATCC 13047 / DSM 30054 / NBRC 13535 / NCTC 10005 / WDCM 00083 / NCDC 279-56</strain>
    </source>
</reference>
<reference key="3">
    <citation type="journal article" date="2014" name="Structure">
        <title>CdiA from Enterobacter cloacae delivers a toxic ribosomal RNase into target bacteria.</title>
        <authorList>
            <person name="Beck C.M."/>
            <person name="Morse R.P."/>
            <person name="Cunningham D.A."/>
            <person name="Iniguez A."/>
            <person name="Low D.A."/>
            <person name="Goulding C.W."/>
            <person name="Hayes C.S."/>
        </authorList>
    </citation>
    <scope>X-RAY CRYSTALLOGRAPHY (2.40 ANGSTROMS) IN COMPLEX WITH CDIA-CT</scope>
    <scope>SUBUNIT</scope>
    <scope>INDUCTION</scope>
    <source>
        <strain>ATCC 13047 / DSM 30054 / NBRC 13535 / NCTC 10005 / WDCM 00083 / NCDC 279-56</strain>
    </source>
</reference>
<dbReference type="EMBL" id="CP001918">
    <property type="status" value="NOT_ANNOTATED_CDS"/>
    <property type="molecule type" value="Genomic_DNA"/>
</dbReference>
<dbReference type="RefSeq" id="WP_044157619.1">
    <property type="nucleotide sequence ID" value="NC_014121.1"/>
</dbReference>
<dbReference type="PDB" id="4NTQ">
    <property type="method" value="X-ray"/>
    <property type="resolution" value="2.40 A"/>
    <property type="chains" value="B=1-145"/>
</dbReference>
<dbReference type="PDBsum" id="4NTQ"/>
<dbReference type="SMR" id="A0A023GPJ0"/>
<dbReference type="Proteomes" id="UP000002363">
    <property type="component" value="Chromosome"/>
</dbReference>
<dbReference type="CDD" id="cd20699">
    <property type="entry name" value="CdiI_ECL-like"/>
    <property type="match status" value="1"/>
</dbReference>
<dbReference type="Gene3D" id="3.30.2450.20">
    <property type="match status" value="1"/>
</dbReference>
<dbReference type="InterPro" id="IPR053755">
    <property type="entry name" value="CDI_immunity_sf"/>
</dbReference>
<dbReference type="InterPro" id="IPR040509">
    <property type="entry name" value="CdiI_C"/>
</dbReference>
<dbReference type="Pfam" id="PF18228">
    <property type="entry name" value="CdiI_N"/>
    <property type="match status" value="1"/>
</dbReference>
<name>CDII_ENTCC</name>
<proteinExistence type="evidence at protein level"/>
<keyword id="KW-0002">3D-structure</keyword>
<keyword id="KW-1185">Reference proteome</keyword>
<sequence>MFGIFSKGEPVSMEGELVQPSSIVINDYEEELHLPLSYWDIKDYKNSWLKSLGEGLSNKTHSALAVSMYEPEKTNFIFTWVLYFEDEKVYVQNNVIFLEECHGFSPENINKFIESRTTHDGDGMKISEWHTDLNSVLDFYHSLNN</sequence>
<gene>
    <name evidence="3" type="primary">cdiI</name>
    <name evidence="4" type="ordered locus">ECL_04450.1</name>
</gene>
<organism>
    <name type="scientific">Enterobacter cloacae subsp. cloacae (strain ATCC 13047 / DSM 30054 / NBRC 13535 / NCTC 10005 / WDCM 00083 / NCDC 279-56)</name>
    <dbReference type="NCBI Taxonomy" id="716541"/>
    <lineage>
        <taxon>Bacteria</taxon>
        <taxon>Pseudomonadati</taxon>
        <taxon>Pseudomonadota</taxon>
        <taxon>Gammaproteobacteria</taxon>
        <taxon>Enterobacterales</taxon>
        <taxon>Enterobacteriaceae</taxon>
        <taxon>Enterobacter</taxon>
        <taxon>Enterobacter cloacae complex</taxon>
    </lineage>
</organism>
<evidence type="ECO:0000269" key="1">
    <source>
    </source>
</evidence>
<evidence type="ECO:0000269" key="2">
    <source>
    </source>
</evidence>
<evidence type="ECO:0000303" key="3">
    <source>
    </source>
</evidence>
<evidence type="ECO:0000305" key="4"/>
<evidence type="ECO:0007829" key="5">
    <source>
        <dbReference type="PDB" id="4NTQ"/>
    </source>
</evidence>
<feature type="chain" id="PRO_0000432080" description="Immunity protein CdiI">
    <location>
        <begin position="1"/>
        <end position="145"/>
    </location>
</feature>
<feature type="strand" evidence="5">
    <location>
        <begin position="2"/>
        <end position="6"/>
    </location>
</feature>
<feature type="strand" evidence="5">
    <location>
        <begin position="11"/>
        <end position="13"/>
    </location>
</feature>
<feature type="strand" evidence="5">
    <location>
        <begin position="16"/>
        <end position="25"/>
    </location>
</feature>
<feature type="strand" evidence="5">
    <location>
        <begin position="28"/>
        <end position="35"/>
    </location>
</feature>
<feature type="helix" evidence="5">
    <location>
        <begin position="41"/>
        <end position="58"/>
    </location>
</feature>
<feature type="strand" evidence="5">
    <location>
        <begin position="60"/>
        <end position="66"/>
    </location>
</feature>
<feature type="helix" evidence="5">
    <location>
        <begin position="71"/>
        <end position="73"/>
    </location>
</feature>
<feature type="strand" evidence="5">
    <location>
        <begin position="74"/>
        <end position="85"/>
    </location>
</feature>
<feature type="strand" evidence="5">
    <location>
        <begin position="88"/>
        <end position="97"/>
    </location>
</feature>
<feature type="turn" evidence="5">
    <location>
        <begin position="99"/>
        <end position="101"/>
    </location>
</feature>
<feature type="helix" evidence="5">
    <location>
        <begin position="106"/>
        <end position="112"/>
    </location>
</feature>
<feature type="strand" evidence="5">
    <location>
        <begin position="129"/>
        <end position="132"/>
    </location>
</feature>
<feature type="helix" evidence="5">
    <location>
        <begin position="133"/>
        <end position="144"/>
    </location>
</feature>
<protein>
    <recommendedName>
        <fullName evidence="3">Immunity protein CdiI</fullName>
    </recommendedName>
</protein>